<accession>Q27683</accession>
<reference key="1">
    <citation type="journal article" date="1997" name="Mol. Biochem. Parasitol.">
        <title>Characterisation of phosphoglycerate kinase genes in Leishmania major and evidence for the absence of a third closely related gene or isoenzyme.</title>
        <authorList>
            <person name="McKoy G.E.M."/>
            <person name="Badal M."/>
            <person name="Prescott Q."/>
            <person name="Lux H."/>
            <person name="Hart D.T."/>
        </authorList>
    </citation>
    <scope>NUCLEOTIDE SEQUENCE [GENOMIC DNA]</scope>
    <source>
        <strain>MHOM/IL/81/Friedlin</strain>
    </source>
</reference>
<reference key="2">
    <citation type="journal article" date="1998" name="Mol. Biochem. Parasitol.">
        <authorList>
            <person name="McKoy G.E.M."/>
            <person name="Badal M."/>
            <person name="Prescott Q."/>
            <person name="Lux H."/>
            <person name="Hart D.T."/>
        </authorList>
    </citation>
    <scope>ERRATUM OF PUBMED:9497041</scope>
</reference>
<dbReference type="EC" id="2.7.2.3" evidence="2"/>
<dbReference type="EMBL" id="L25120">
    <property type="protein sequence ID" value="AAC12658.1"/>
    <property type="molecule type" value="Genomic_DNA"/>
</dbReference>
<dbReference type="SMR" id="Q27683"/>
<dbReference type="VEuPathDB" id="TriTrypDB:LmjF.20.0110"/>
<dbReference type="VEuPathDB" id="TriTrypDB:LMJFC_200006200"/>
<dbReference type="VEuPathDB" id="TriTrypDB:LMJLV39_000016100"/>
<dbReference type="VEuPathDB" id="TriTrypDB:LMJSD75_300041800"/>
<dbReference type="eggNOG" id="KOG1367">
    <property type="taxonomic scope" value="Eukaryota"/>
</dbReference>
<dbReference type="BRENDA" id="2.7.2.3">
    <property type="organism ID" value="2950"/>
</dbReference>
<dbReference type="UniPathway" id="UPA00109">
    <property type="reaction ID" value="UER00185"/>
</dbReference>
<dbReference type="GO" id="GO:0005737">
    <property type="term" value="C:cytoplasm"/>
    <property type="evidence" value="ECO:0007669"/>
    <property type="project" value="UniProtKB-SubCell"/>
</dbReference>
<dbReference type="GO" id="GO:0005524">
    <property type="term" value="F:ATP binding"/>
    <property type="evidence" value="ECO:0007669"/>
    <property type="project" value="UniProtKB-KW"/>
</dbReference>
<dbReference type="GO" id="GO:0046872">
    <property type="term" value="F:metal ion binding"/>
    <property type="evidence" value="ECO:0007669"/>
    <property type="project" value="UniProtKB-KW"/>
</dbReference>
<dbReference type="GO" id="GO:0004618">
    <property type="term" value="F:phosphoglycerate kinase activity"/>
    <property type="evidence" value="ECO:0007669"/>
    <property type="project" value="UniProtKB-EC"/>
</dbReference>
<dbReference type="GO" id="GO:0006096">
    <property type="term" value="P:glycolytic process"/>
    <property type="evidence" value="ECO:0007669"/>
    <property type="project" value="UniProtKB-UniPathway"/>
</dbReference>
<dbReference type="CDD" id="cd00318">
    <property type="entry name" value="Phosphoglycerate_kinase"/>
    <property type="match status" value="1"/>
</dbReference>
<dbReference type="FunFam" id="3.40.50.1260:FF:000001">
    <property type="entry name" value="Phosphoglycerate kinase"/>
    <property type="match status" value="1"/>
</dbReference>
<dbReference type="FunFam" id="3.40.50.1260:FF:000011">
    <property type="entry name" value="Phosphoglycerate kinase"/>
    <property type="match status" value="1"/>
</dbReference>
<dbReference type="Gene3D" id="3.40.50.1260">
    <property type="entry name" value="Phosphoglycerate kinase, N-terminal domain"/>
    <property type="match status" value="2"/>
</dbReference>
<dbReference type="HAMAP" id="MF_00145">
    <property type="entry name" value="Phosphoglyc_kinase"/>
    <property type="match status" value="1"/>
</dbReference>
<dbReference type="InterPro" id="IPR027250">
    <property type="entry name" value="Pgk_euglenozoa"/>
</dbReference>
<dbReference type="InterPro" id="IPR001576">
    <property type="entry name" value="Phosphoglycerate_kinase"/>
</dbReference>
<dbReference type="InterPro" id="IPR015911">
    <property type="entry name" value="Phosphoglycerate_kinase_CS"/>
</dbReference>
<dbReference type="InterPro" id="IPR015824">
    <property type="entry name" value="Phosphoglycerate_kinase_N"/>
</dbReference>
<dbReference type="InterPro" id="IPR036043">
    <property type="entry name" value="Phosphoglycerate_kinase_sf"/>
</dbReference>
<dbReference type="PANTHER" id="PTHR11406">
    <property type="entry name" value="PHOSPHOGLYCERATE KINASE"/>
    <property type="match status" value="1"/>
</dbReference>
<dbReference type="PANTHER" id="PTHR11406:SF23">
    <property type="entry name" value="PHOSPHOGLYCERATE KINASE 1, CHLOROPLASTIC-RELATED"/>
    <property type="match status" value="1"/>
</dbReference>
<dbReference type="Pfam" id="PF00162">
    <property type="entry name" value="PGK"/>
    <property type="match status" value="1"/>
</dbReference>
<dbReference type="PIRSF" id="PIRSF000724">
    <property type="entry name" value="Pgk"/>
    <property type="match status" value="1"/>
</dbReference>
<dbReference type="PIRSF" id="PIRSF500126">
    <property type="entry name" value="Pgk_euglenozoa"/>
    <property type="match status" value="1"/>
</dbReference>
<dbReference type="PRINTS" id="PR00477">
    <property type="entry name" value="PHGLYCKINASE"/>
</dbReference>
<dbReference type="SUPFAM" id="SSF53748">
    <property type="entry name" value="Phosphoglycerate kinase"/>
    <property type="match status" value="1"/>
</dbReference>
<dbReference type="PROSITE" id="PS00111">
    <property type="entry name" value="PGLYCERATE_KINASE"/>
    <property type="match status" value="1"/>
</dbReference>
<proteinExistence type="inferred from homology"/>
<gene>
    <name type="primary">PGKB</name>
</gene>
<comment type="catalytic activity">
    <reaction evidence="2">
        <text>(2R)-3-phosphoglycerate + ATP = (2R)-3-phospho-glyceroyl phosphate + ADP</text>
        <dbReference type="Rhea" id="RHEA:14801"/>
        <dbReference type="ChEBI" id="CHEBI:30616"/>
        <dbReference type="ChEBI" id="CHEBI:57604"/>
        <dbReference type="ChEBI" id="CHEBI:58272"/>
        <dbReference type="ChEBI" id="CHEBI:456216"/>
        <dbReference type="EC" id="2.7.2.3"/>
    </reaction>
</comment>
<comment type="cofactor">
    <cofactor evidence="3">
        <name>Mg(2+)</name>
        <dbReference type="ChEBI" id="CHEBI:18420"/>
    </cofactor>
</comment>
<comment type="pathway">
    <text>Carbohydrate degradation; glycolysis; pyruvate from D-glyceraldehyde 3-phosphate: step 2/5.</text>
</comment>
<comment type="subunit">
    <text evidence="1">Monomer.</text>
</comment>
<comment type="subcellular location">
    <subcellularLocation>
        <location>Cytoplasm</location>
    </subcellularLocation>
</comment>
<comment type="domain">
    <text>This cytosolic PGK lacks a C-terminal extension of 38 AA which is present in the glycosomal isoenzyme.</text>
</comment>
<comment type="similarity">
    <text evidence="5">Belongs to the phosphoglycerate kinase family.</text>
</comment>
<keyword id="KW-0067">ATP-binding</keyword>
<keyword id="KW-0963">Cytoplasm</keyword>
<keyword id="KW-0324">Glycolysis</keyword>
<keyword id="KW-0418">Kinase</keyword>
<keyword id="KW-0460">Magnesium</keyword>
<keyword id="KW-0479">Metal-binding</keyword>
<keyword id="KW-0547">Nucleotide-binding</keyword>
<keyword id="KW-0808">Transferase</keyword>
<sequence length="417" mass="44963">MSLVLKKSIDDATVRDKKVLIRVDFNVPVKNGKITNDFRIRSALPTIQKVLKEGGSCILMSHLGRPKGARMSDPSPEKGVRGYEEAATLRPVAARISELLGQKVEFAPDCLDAASYASKLKNADVLLLENVRFYAEEGSKKEEERDAMAKVLASYGDVYVSDAFGTAHRDSATMTGIPKVLGAGYAGYLMEKEINYFSRVLNNPPRPLVAIVGGAKVSDKIQLLDNMLGRINYLVIGGAMAYTFQKAQGRKIGISMCEEDKLDLAKSLLKKAQERNVQVFLPVDHVCNKEFKAADSPLVTESVDVPDGYMALDIGPRTIHMYEEVIGRCKSAIWNGPMGVFEMPCYSKGTFAVAKAMGTGTQKNGLMSIIGGGDSASAAELSGEAKNMSHVSTGGGASLELLEGKTLPGVAILTDRE</sequence>
<name>PGKB_LEIMA</name>
<protein>
    <recommendedName>
        <fullName>Phosphoglycerate kinase, cytosolic</fullName>
        <ecNumber evidence="2">2.7.2.3</ecNumber>
    </recommendedName>
    <alternativeName>
        <fullName>Phosphoglycerate kinase B</fullName>
    </alternativeName>
    <alternativeName>
        <fullName>cPGK</fullName>
    </alternativeName>
</protein>
<evidence type="ECO:0000250" key="1"/>
<evidence type="ECO:0000250" key="2">
    <source>
        <dbReference type="UniProtKB" id="P00558"/>
    </source>
</evidence>
<evidence type="ECO:0000250" key="3">
    <source>
        <dbReference type="UniProtKB" id="P07378"/>
    </source>
</evidence>
<evidence type="ECO:0000250" key="4">
    <source>
        <dbReference type="UniProtKB" id="Q7SIB7"/>
    </source>
</evidence>
<evidence type="ECO:0000305" key="5"/>
<feature type="chain" id="PRO_0000145853" description="Phosphoglycerate kinase, cytosolic">
    <location>
        <begin position="1"/>
        <end position="417"/>
    </location>
</feature>
<feature type="binding site" evidence="2">
    <location>
        <position position="23"/>
    </location>
    <ligand>
        <name>(2R)-3-phosphoglycerate</name>
        <dbReference type="ChEBI" id="CHEBI:58272"/>
    </ligand>
</feature>
<feature type="binding site" evidence="4">
    <location>
        <position position="24"/>
    </location>
    <ligand>
        <name>(2R)-3-phosphoglycerate</name>
        <dbReference type="ChEBI" id="CHEBI:58272"/>
    </ligand>
</feature>
<feature type="binding site" evidence="2">
    <location>
        <position position="25"/>
    </location>
    <ligand>
        <name>(2R)-3-phosphoglycerate</name>
        <dbReference type="ChEBI" id="CHEBI:58272"/>
    </ligand>
</feature>
<feature type="binding site" evidence="4">
    <location>
        <position position="26"/>
    </location>
    <ligand>
        <name>(2R)-3-phosphoglycerate</name>
        <dbReference type="ChEBI" id="CHEBI:58272"/>
    </ligand>
</feature>
<feature type="binding site" evidence="4">
    <location>
        <position position="39"/>
    </location>
    <ligand>
        <name>(2R)-3-phosphoglycerate</name>
        <dbReference type="ChEBI" id="CHEBI:58272"/>
    </ligand>
</feature>
<feature type="binding site" evidence="2">
    <location>
        <position position="61"/>
    </location>
    <ligand>
        <name>(2R)-3-phosphoglycerate</name>
        <dbReference type="ChEBI" id="CHEBI:58272"/>
    </ligand>
</feature>
<feature type="binding site" evidence="4">
    <location>
        <position position="62"/>
    </location>
    <ligand>
        <name>(2R)-3-phosphoglycerate</name>
        <dbReference type="ChEBI" id="CHEBI:58272"/>
    </ligand>
</feature>
<feature type="binding site" evidence="2">
    <location>
        <position position="64"/>
    </location>
    <ligand>
        <name>(2R)-3-phosphoglycerate</name>
        <dbReference type="ChEBI" id="CHEBI:58272"/>
    </ligand>
</feature>
<feature type="binding site" evidence="4">
    <location>
        <position position="65"/>
    </location>
    <ligand>
        <name>(2R)-3-phosphoglycerate</name>
        <dbReference type="ChEBI" id="CHEBI:58272"/>
    </ligand>
</feature>
<feature type="binding site" evidence="4">
    <location>
        <position position="132"/>
    </location>
    <ligand>
        <name>(2R)-3-phosphoglycerate</name>
        <dbReference type="ChEBI" id="CHEBI:58272"/>
    </ligand>
</feature>
<feature type="binding site" evidence="2">
    <location>
        <position position="168"/>
    </location>
    <ligand>
        <name>(2R)-3-phosphoglycerate</name>
        <dbReference type="ChEBI" id="CHEBI:58272"/>
    </ligand>
</feature>
<feature type="binding site" evidence="4">
    <location>
        <position position="169"/>
    </location>
    <ligand>
        <name>(2R)-3-phosphoglycerate</name>
        <dbReference type="ChEBI" id="CHEBI:58272"/>
    </ligand>
</feature>
<feature type="binding site" evidence="2">
    <location>
        <position position="214"/>
    </location>
    <ligand>
        <name>ADP</name>
        <dbReference type="ChEBI" id="CHEBI:456216"/>
    </ligand>
</feature>
<feature type="binding site" evidence="2">
    <location>
        <position position="214"/>
    </location>
    <ligand>
        <name>CDP</name>
        <dbReference type="ChEBI" id="CHEBI:58069"/>
    </ligand>
</feature>
<feature type="binding site" evidence="3">
    <location>
        <position position="215"/>
    </location>
    <ligand>
        <name>ADP</name>
        <dbReference type="ChEBI" id="CHEBI:456216"/>
    </ligand>
</feature>
<feature type="binding site" evidence="4">
    <location>
        <position position="215"/>
    </location>
    <ligand>
        <name>AMP</name>
        <dbReference type="ChEBI" id="CHEBI:456215"/>
    </ligand>
</feature>
<feature type="binding site" evidence="4">
    <location>
        <position position="215"/>
    </location>
    <ligand>
        <name>ATP</name>
        <dbReference type="ChEBI" id="CHEBI:30616"/>
    </ligand>
</feature>
<feature type="binding site" evidence="2">
    <location>
        <position position="215"/>
    </location>
    <ligand>
        <name>Mg(2+)</name>
        <dbReference type="ChEBI" id="CHEBI:18420"/>
    </ligand>
</feature>
<feature type="binding site" evidence="3">
    <location>
        <position position="216"/>
    </location>
    <ligand>
        <name>(2R)-3-phosphoglycerate</name>
        <dbReference type="ChEBI" id="CHEBI:58272"/>
    </ligand>
</feature>
<feature type="binding site" evidence="4">
    <location>
        <position position="216"/>
    </location>
    <ligand>
        <name>AMP</name>
        <dbReference type="ChEBI" id="CHEBI:456215"/>
    </ligand>
</feature>
<feature type="binding site" evidence="2">
    <location>
        <position position="219"/>
    </location>
    <ligand>
        <name>CDP</name>
        <dbReference type="ChEBI" id="CHEBI:58069"/>
    </ligand>
</feature>
<feature type="binding site" evidence="2">
    <location>
        <position position="219"/>
    </location>
    <ligand>
        <name>Mg(2+)</name>
        <dbReference type="ChEBI" id="CHEBI:18420"/>
    </ligand>
</feature>
<feature type="binding site" evidence="3">
    <location>
        <position position="220"/>
    </location>
    <ligand>
        <name>ADP</name>
        <dbReference type="ChEBI" id="CHEBI:456216"/>
    </ligand>
</feature>
<feature type="binding site" evidence="4">
    <location>
        <position position="220"/>
    </location>
    <ligand>
        <name>AMP</name>
        <dbReference type="ChEBI" id="CHEBI:456215"/>
    </ligand>
</feature>
<feature type="binding site" evidence="4">
    <location>
        <position position="220"/>
    </location>
    <ligand>
        <name>ATP</name>
        <dbReference type="ChEBI" id="CHEBI:30616"/>
    </ligand>
</feature>
<feature type="binding site" evidence="2">
    <location>
        <position position="238"/>
    </location>
    <ligand>
        <name>ADP</name>
        <dbReference type="ChEBI" id="CHEBI:456216"/>
    </ligand>
</feature>
<feature type="binding site" evidence="2">
    <location>
        <position position="238"/>
    </location>
    <ligand>
        <name>CDP</name>
        <dbReference type="ChEBI" id="CHEBI:58069"/>
    </ligand>
</feature>
<feature type="binding site" evidence="4">
    <location>
        <position position="239"/>
    </location>
    <ligand>
        <name>AMP</name>
        <dbReference type="ChEBI" id="CHEBI:456215"/>
    </ligand>
</feature>
<feature type="binding site" evidence="4">
    <location>
        <position position="239"/>
    </location>
    <ligand>
        <name>ATP</name>
        <dbReference type="ChEBI" id="CHEBI:30616"/>
    </ligand>
</feature>
<feature type="binding site" evidence="3">
    <location>
        <position position="311"/>
    </location>
    <ligand>
        <name>ADP</name>
        <dbReference type="ChEBI" id="CHEBI:456216"/>
    </ligand>
</feature>
<feature type="binding site" evidence="4">
    <location>
        <position position="311"/>
    </location>
    <ligand>
        <name>AMP</name>
        <dbReference type="ChEBI" id="CHEBI:456215"/>
    </ligand>
</feature>
<feature type="binding site" evidence="4">
    <location>
        <position position="311"/>
    </location>
    <ligand>
        <name>ATP</name>
        <dbReference type="ChEBI" id="CHEBI:30616"/>
    </ligand>
</feature>
<feature type="binding site" evidence="3">
    <location>
        <position position="335"/>
    </location>
    <ligand>
        <name>ADP</name>
        <dbReference type="ChEBI" id="CHEBI:456216"/>
    </ligand>
</feature>
<feature type="binding site" evidence="2">
    <location>
        <position position="336"/>
    </location>
    <ligand>
        <name>CDP</name>
        <dbReference type="ChEBI" id="CHEBI:58069"/>
    </ligand>
</feature>
<feature type="binding site" evidence="2">
    <location>
        <position position="341"/>
    </location>
    <ligand>
        <name>ADP</name>
        <dbReference type="ChEBI" id="CHEBI:456216"/>
    </ligand>
</feature>
<feature type="binding site" evidence="2">
    <location>
        <position position="341"/>
    </location>
    <ligand>
        <name>CDP</name>
        <dbReference type="ChEBI" id="CHEBI:58069"/>
    </ligand>
</feature>
<feature type="binding site" evidence="3">
    <location>
        <position position="342"/>
    </location>
    <ligand>
        <name>ADP</name>
        <dbReference type="ChEBI" id="CHEBI:456216"/>
    </ligand>
</feature>
<feature type="binding site" evidence="4">
    <location>
        <position position="342"/>
    </location>
    <ligand>
        <name>AMP</name>
        <dbReference type="ChEBI" id="CHEBI:456215"/>
    </ligand>
</feature>
<feature type="binding site" evidence="4">
    <location>
        <position position="342"/>
    </location>
    <ligand>
        <name>ATP</name>
        <dbReference type="ChEBI" id="CHEBI:30616"/>
    </ligand>
</feature>
<feature type="binding site" evidence="3">
    <location>
        <position position="374"/>
    </location>
    <ligand>
        <name>ADP</name>
        <dbReference type="ChEBI" id="CHEBI:456216"/>
    </ligand>
</feature>
<feature type="binding site" evidence="4">
    <location>
        <position position="374"/>
    </location>
    <ligand>
        <name>ATP</name>
        <dbReference type="ChEBI" id="CHEBI:30616"/>
    </ligand>
</feature>
<feature type="binding site" evidence="4">
    <location>
        <position position="374"/>
    </location>
    <ligand>
        <name>Mg(2+)</name>
        <dbReference type="ChEBI" id="CHEBI:18420"/>
    </ligand>
</feature>
<feature type="binding site" evidence="3">
    <location>
        <position position="375"/>
    </location>
    <ligand>
        <name>ADP</name>
        <dbReference type="ChEBI" id="CHEBI:456216"/>
    </ligand>
</feature>
<feature type="binding site" evidence="4">
    <location>
        <position position="375"/>
    </location>
    <ligand>
        <name>ATP</name>
        <dbReference type="ChEBI" id="CHEBI:30616"/>
    </ligand>
</feature>
<organism>
    <name type="scientific">Leishmania major</name>
    <dbReference type="NCBI Taxonomy" id="5664"/>
    <lineage>
        <taxon>Eukaryota</taxon>
        <taxon>Discoba</taxon>
        <taxon>Euglenozoa</taxon>
        <taxon>Kinetoplastea</taxon>
        <taxon>Metakinetoplastina</taxon>
        <taxon>Trypanosomatida</taxon>
        <taxon>Trypanosomatidae</taxon>
        <taxon>Leishmaniinae</taxon>
        <taxon>Leishmania</taxon>
    </lineage>
</organism>